<protein>
    <recommendedName>
        <fullName>Pathogenesis-related protein PRMS</fullName>
    </recommendedName>
</protein>
<proteinExistence type="evidence at transcript level"/>
<accession>Q00008</accession>
<name>PRMS_MAIZE</name>
<keyword id="KW-1015">Disulfide bond</keyword>
<keyword id="KW-0568">Pathogenesis-related protein</keyword>
<keyword id="KW-0611">Plant defense</keyword>
<keyword id="KW-1185">Reference proteome</keyword>
<keyword id="KW-0732">Signal</keyword>
<sequence length="167" mass="18390">MEASNKLAVLLLWLVMAAATAVHPSYSENSPQDYLTPQNSARAAVGVGPVTWSTKLQQFAEKYAAQRAGDCRLQHSGGPYGENIFWGSAGFDWKAVDAVRSWVDEKQWYNYATNSCAAGKVCGHYTQVVWRATTSIGCARVVCRDNRGVFIICNYEPRGNIAGMKPY</sequence>
<feature type="signal peptide" evidence="2">
    <location>
        <begin position="1"/>
        <end position="27"/>
    </location>
</feature>
<feature type="chain" id="PRO_0000006311" description="Pathogenesis-related protein PRMS">
    <location>
        <begin position="28"/>
        <end position="167"/>
    </location>
</feature>
<feature type="domain" description="SCP">
    <location>
        <begin position="37"/>
        <end position="155"/>
    </location>
</feature>
<feature type="disulfide bond" evidence="1">
    <location>
        <begin position="71"/>
        <end position="143"/>
    </location>
</feature>
<feature type="disulfide bond" evidence="1">
    <location>
        <begin position="116"/>
        <end position="122"/>
    </location>
</feature>
<feature type="disulfide bond" evidence="1">
    <location>
        <begin position="138"/>
        <end position="153"/>
    </location>
</feature>
<organism>
    <name type="scientific">Zea mays</name>
    <name type="common">Maize</name>
    <dbReference type="NCBI Taxonomy" id="4577"/>
    <lineage>
        <taxon>Eukaryota</taxon>
        <taxon>Viridiplantae</taxon>
        <taxon>Streptophyta</taxon>
        <taxon>Embryophyta</taxon>
        <taxon>Tracheophyta</taxon>
        <taxon>Spermatophyta</taxon>
        <taxon>Magnoliopsida</taxon>
        <taxon>Liliopsida</taxon>
        <taxon>Poales</taxon>
        <taxon>Poaceae</taxon>
        <taxon>PACMAD clade</taxon>
        <taxon>Panicoideae</taxon>
        <taxon>Andropogonodae</taxon>
        <taxon>Andropogoneae</taxon>
        <taxon>Tripsacinae</taxon>
        <taxon>Zea</taxon>
    </lineage>
</organism>
<reference key="1">
    <citation type="journal article" date="1991" name="Plant Mol. Biol.">
        <title>A gene coding for a basic pathogenesis-related (PR-like) protein from Zea mays. Molecular cloning and induction by a fungus (Fusarium moniliforme) in germinating maize seeds.</title>
        <authorList>
            <person name="Casacuberta J.M."/>
            <person name="Puigdomenech P."/>
            <person name="San Segundo B."/>
        </authorList>
    </citation>
    <scope>NUCLEOTIDE SEQUENCE [GENOMIC DNA]</scope>
    <source>
        <strain>cv. Wisconsin 64A</strain>
        <tissue>Seed</tissue>
    </source>
</reference>
<gene>
    <name type="primary">PRMS</name>
</gene>
<evidence type="ECO:0000250" key="1"/>
<evidence type="ECO:0000255" key="2"/>
<evidence type="ECO:0000305" key="3"/>
<comment type="function">
    <text>Probably involved in the defense reaction of plants against pathogens.</text>
</comment>
<comment type="induction">
    <text>By fungal infection in germinating seeds.</text>
</comment>
<comment type="similarity">
    <text evidence="3">Belongs to the CRISP family.</text>
</comment>
<dbReference type="EMBL" id="X54325">
    <property type="protein sequence ID" value="CAA38223.1"/>
    <property type="molecule type" value="Genomic_DNA"/>
</dbReference>
<dbReference type="PIR" id="S14969">
    <property type="entry name" value="S14969"/>
</dbReference>
<dbReference type="SMR" id="Q00008"/>
<dbReference type="FunCoup" id="Q00008">
    <property type="interactions" value="1426"/>
</dbReference>
<dbReference type="STRING" id="4577.Q00008"/>
<dbReference type="PaxDb" id="4577-AC205274.3_FGP001"/>
<dbReference type="MaizeGDB" id="66057"/>
<dbReference type="eggNOG" id="KOG3017">
    <property type="taxonomic scope" value="Eukaryota"/>
</dbReference>
<dbReference type="InParanoid" id="Q00008"/>
<dbReference type="Proteomes" id="UP000007305">
    <property type="component" value="Unplaced"/>
</dbReference>
<dbReference type="ExpressionAtlas" id="Q00008">
    <property type="expression patterns" value="baseline and differential"/>
</dbReference>
<dbReference type="GO" id="GO:0005615">
    <property type="term" value="C:extracellular space"/>
    <property type="evidence" value="ECO:0000318"/>
    <property type="project" value="GO_Central"/>
</dbReference>
<dbReference type="GO" id="GO:0006952">
    <property type="term" value="P:defense response"/>
    <property type="evidence" value="ECO:0007669"/>
    <property type="project" value="UniProtKB-KW"/>
</dbReference>
<dbReference type="GO" id="GO:0019953">
    <property type="term" value="P:sexual reproduction"/>
    <property type="evidence" value="ECO:0000318"/>
    <property type="project" value="GO_Central"/>
</dbReference>
<dbReference type="CDD" id="cd05381">
    <property type="entry name" value="CAP_PR-1"/>
    <property type="match status" value="1"/>
</dbReference>
<dbReference type="FunFam" id="3.40.33.10:FF:000009">
    <property type="entry name" value="Pathogenesis-related protein 1"/>
    <property type="match status" value="1"/>
</dbReference>
<dbReference type="Gene3D" id="3.40.33.10">
    <property type="entry name" value="CAP"/>
    <property type="match status" value="1"/>
</dbReference>
<dbReference type="InterPro" id="IPR018244">
    <property type="entry name" value="Allrgn_V5/Tpx1_CS"/>
</dbReference>
<dbReference type="InterPro" id="IPR014044">
    <property type="entry name" value="CAP_dom"/>
</dbReference>
<dbReference type="InterPro" id="IPR035940">
    <property type="entry name" value="CAP_sf"/>
</dbReference>
<dbReference type="InterPro" id="IPR001283">
    <property type="entry name" value="CRISP-related"/>
</dbReference>
<dbReference type="InterPro" id="IPR002413">
    <property type="entry name" value="V5_allergen-like"/>
</dbReference>
<dbReference type="PANTHER" id="PTHR10334">
    <property type="entry name" value="CYSTEINE-RICH SECRETORY PROTEIN-RELATED"/>
    <property type="match status" value="1"/>
</dbReference>
<dbReference type="Pfam" id="PF00188">
    <property type="entry name" value="CAP"/>
    <property type="match status" value="1"/>
</dbReference>
<dbReference type="PRINTS" id="PR00838">
    <property type="entry name" value="V5ALLERGEN"/>
</dbReference>
<dbReference type="PRINTS" id="PR00837">
    <property type="entry name" value="V5TPXLIKE"/>
</dbReference>
<dbReference type="SMART" id="SM00198">
    <property type="entry name" value="SCP"/>
    <property type="match status" value="1"/>
</dbReference>
<dbReference type="SUPFAM" id="SSF55797">
    <property type="entry name" value="PR-1-like"/>
    <property type="match status" value="1"/>
</dbReference>
<dbReference type="PROSITE" id="PS01009">
    <property type="entry name" value="CRISP_1"/>
    <property type="match status" value="1"/>
</dbReference>
<dbReference type="PROSITE" id="PS01010">
    <property type="entry name" value="CRISP_2"/>
    <property type="match status" value="1"/>
</dbReference>